<evidence type="ECO:0000255" key="1">
    <source>
        <dbReference type="PROSITE-ProRule" id="PRU00438"/>
    </source>
</evidence>
<evidence type="ECO:0000255" key="2">
    <source>
        <dbReference type="PROSITE-ProRule" id="PRU00439"/>
    </source>
</evidence>
<evidence type="ECO:0000255" key="3">
    <source>
        <dbReference type="RuleBase" id="RU361195"/>
    </source>
</evidence>
<evidence type="ECO:0000256" key="4">
    <source>
        <dbReference type="SAM" id="MobiDB-lite"/>
    </source>
</evidence>
<evidence type="ECO:0000269" key="5">
    <source>
    </source>
</evidence>
<evidence type="ECO:0000269" key="6">
    <source>
    </source>
</evidence>
<evidence type="ECO:0000269" key="7">
    <source>
    </source>
</evidence>
<evidence type="ECO:0000303" key="8">
    <source>
    </source>
</evidence>
<evidence type="ECO:0000305" key="9"/>
<evidence type="ECO:0000305" key="10">
    <source>
    </source>
</evidence>
<evidence type="ECO:0000312" key="11">
    <source>
        <dbReference type="Proteomes" id="UP000001940"/>
    </source>
</evidence>
<evidence type="ECO:0000312" key="12">
    <source>
        <dbReference type="WormBase" id="R05D11.1"/>
    </source>
</evidence>
<proteinExistence type="evidence at protein level"/>
<dbReference type="EMBL" id="BX284601">
    <property type="protein sequence ID" value="CAA99889.1"/>
    <property type="molecule type" value="Genomic_DNA"/>
</dbReference>
<dbReference type="PIR" id="T23920">
    <property type="entry name" value="T23920"/>
</dbReference>
<dbReference type="RefSeq" id="NP_492321.1">
    <property type="nucleotide sequence ID" value="NM_059920.6"/>
</dbReference>
<dbReference type="SMR" id="Q21733"/>
<dbReference type="FunCoup" id="Q21733">
    <property type="interactions" value="1475"/>
</dbReference>
<dbReference type="STRING" id="6239.R05D11.1.1"/>
<dbReference type="PaxDb" id="6239-R05D11.1"/>
<dbReference type="PeptideAtlas" id="Q21733"/>
<dbReference type="EnsemblMetazoa" id="R05D11.1.1">
    <property type="protein sequence ID" value="R05D11.1.1"/>
    <property type="gene ID" value="WBGene00000904"/>
</dbReference>
<dbReference type="GeneID" id="187612"/>
<dbReference type="KEGG" id="cel:CELE_R05D11.1"/>
<dbReference type="UCSC" id="R05D11.1">
    <property type="organism name" value="c. elegans"/>
</dbReference>
<dbReference type="AGR" id="WB:WBGene00000904"/>
<dbReference type="CTD" id="187612"/>
<dbReference type="WormBase" id="R05D11.1">
    <property type="protein sequence ID" value="CE06236"/>
    <property type="gene ID" value="WBGene00000904"/>
    <property type="gene designation" value="daf-8"/>
</dbReference>
<dbReference type="eggNOG" id="KOG3701">
    <property type="taxonomic scope" value="Eukaryota"/>
</dbReference>
<dbReference type="GeneTree" id="ENSGT00940000170124"/>
<dbReference type="HOGENOM" id="CLU_026736_0_2_1"/>
<dbReference type="InParanoid" id="Q21733"/>
<dbReference type="OMA" id="YECVEYE"/>
<dbReference type="OrthoDB" id="5794312at2759"/>
<dbReference type="PhylomeDB" id="Q21733"/>
<dbReference type="Reactome" id="R-CEL-1181150">
    <property type="pathway name" value="Signaling by NODAL"/>
</dbReference>
<dbReference type="Reactome" id="R-CEL-1502540">
    <property type="pathway name" value="Signaling by Activin"/>
</dbReference>
<dbReference type="Reactome" id="R-CEL-2173788">
    <property type="pathway name" value="Downregulation of TGF-beta receptor signaling"/>
</dbReference>
<dbReference type="Reactome" id="R-CEL-2173789">
    <property type="pathway name" value="TGF-beta receptor signaling activates SMADs"/>
</dbReference>
<dbReference type="Reactome" id="R-CEL-2173795">
    <property type="pathway name" value="Downregulation of SMAD2/3:SMAD4 transcriptional activity"/>
</dbReference>
<dbReference type="Reactome" id="R-CEL-2173796">
    <property type="pathway name" value="SMAD2/SMAD3:SMAD4 heterotrimer regulates transcription"/>
</dbReference>
<dbReference type="Reactome" id="R-CEL-5689880">
    <property type="pathway name" value="Ub-specific processing proteases"/>
</dbReference>
<dbReference type="Reactome" id="R-CEL-8941855">
    <property type="pathway name" value="RUNX3 regulates CDKN1A transcription"/>
</dbReference>
<dbReference type="Reactome" id="R-CEL-9617828">
    <property type="pathway name" value="FOXO-mediated transcription of cell cycle genes"/>
</dbReference>
<dbReference type="PRO" id="PR:Q21733"/>
<dbReference type="Proteomes" id="UP000001940">
    <property type="component" value="Chromosome I"/>
</dbReference>
<dbReference type="Bgee" id="WBGene00000904">
    <property type="expression patterns" value="Expressed in pharyngeal muscle cell (C elegans) and 3 other cell types or tissues"/>
</dbReference>
<dbReference type="GO" id="GO:0005829">
    <property type="term" value="C:cytosol"/>
    <property type="evidence" value="ECO:0000314"/>
    <property type="project" value="WormBase"/>
</dbReference>
<dbReference type="GO" id="GO:0071144">
    <property type="term" value="C:heteromeric SMAD protein complex"/>
    <property type="evidence" value="ECO:0000318"/>
    <property type="project" value="GO_Central"/>
</dbReference>
<dbReference type="GO" id="GO:0005634">
    <property type="term" value="C:nucleus"/>
    <property type="evidence" value="ECO:0000314"/>
    <property type="project" value="WormBase"/>
</dbReference>
<dbReference type="GO" id="GO:0000981">
    <property type="term" value="F:DNA-binding transcription factor activity, RNA polymerase II-specific"/>
    <property type="evidence" value="ECO:0000318"/>
    <property type="project" value="GO_Central"/>
</dbReference>
<dbReference type="GO" id="GO:0070411">
    <property type="term" value="F:I-SMAD binding"/>
    <property type="evidence" value="ECO:0000318"/>
    <property type="project" value="GO_Central"/>
</dbReference>
<dbReference type="GO" id="GO:0046872">
    <property type="term" value="F:metal ion binding"/>
    <property type="evidence" value="ECO:0007669"/>
    <property type="project" value="UniProtKB-KW"/>
</dbReference>
<dbReference type="GO" id="GO:0000978">
    <property type="term" value="F:RNA polymerase II cis-regulatory region sequence-specific DNA binding"/>
    <property type="evidence" value="ECO:0000318"/>
    <property type="project" value="GO_Central"/>
</dbReference>
<dbReference type="GO" id="GO:0061629">
    <property type="term" value="F:RNA polymerase II-specific DNA-binding transcription factor binding"/>
    <property type="evidence" value="ECO:0000353"/>
    <property type="project" value="WormBase"/>
</dbReference>
<dbReference type="GO" id="GO:0032924">
    <property type="term" value="P:activin receptor signaling pathway"/>
    <property type="evidence" value="ECO:0000318"/>
    <property type="project" value="GO_Central"/>
</dbReference>
<dbReference type="GO" id="GO:0009653">
    <property type="term" value="P:anatomical structure morphogenesis"/>
    <property type="evidence" value="ECO:0000318"/>
    <property type="project" value="GO_Central"/>
</dbReference>
<dbReference type="GO" id="GO:0030154">
    <property type="term" value="P:cell differentiation"/>
    <property type="evidence" value="ECO:0000318"/>
    <property type="project" value="GO_Central"/>
</dbReference>
<dbReference type="GO" id="GO:0043053">
    <property type="term" value="P:dauer entry"/>
    <property type="evidence" value="ECO:0000316"/>
    <property type="project" value="UniProtKB"/>
</dbReference>
<dbReference type="GO" id="GO:0040024">
    <property type="term" value="P:dauer larval development"/>
    <property type="evidence" value="ECO:0000315"/>
    <property type="project" value="WormBase"/>
</dbReference>
<dbReference type="GO" id="GO:0050829">
    <property type="term" value="P:defense response to Gram-negative bacterium"/>
    <property type="evidence" value="ECO:0000315"/>
    <property type="project" value="WormBase"/>
</dbReference>
<dbReference type="GO" id="GO:0008340">
    <property type="term" value="P:determination of adult lifespan"/>
    <property type="evidence" value="ECO:0000315"/>
    <property type="project" value="WormBase"/>
</dbReference>
<dbReference type="GO" id="GO:0018991">
    <property type="term" value="P:egg-laying behavior"/>
    <property type="evidence" value="ECO:0000316"/>
    <property type="project" value="WormBase"/>
</dbReference>
<dbReference type="GO" id="GO:0061067">
    <property type="term" value="P:negative regulation of dauer larval development"/>
    <property type="evidence" value="ECO:0000315"/>
    <property type="project" value="WormBase"/>
</dbReference>
<dbReference type="GO" id="GO:0000122">
    <property type="term" value="P:negative regulation of transcription by RNA polymerase II"/>
    <property type="evidence" value="ECO:0000315"/>
    <property type="project" value="WormBase"/>
</dbReference>
<dbReference type="GO" id="GO:0043476">
    <property type="term" value="P:pigment accumulation"/>
    <property type="evidence" value="ECO:0000316"/>
    <property type="project" value="WormBase"/>
</dbReference>
<dbReference type="GO" id="GO:0045944">
    <property type="term" value="P:positive regulation of transcription by RNA polymerase II"/>
    <property type="evidence" value="ECO:0000315"/>
    <property type="project" value="WormBase"/>
</dbReference>
<dbReference type="GO" id="GO:0061065">
    <property type="term" value="P:regulation of dauer larval development"/>
    <property type="evidence" value="ECO:0000315"/>
    <property type="project" value="UniProtKB"/>
</dbReference>
<dbReference type="GO" id="GO:0060395">
    <property type="term" value="P:SMAD protein signal transduction"/>
    <property type="evidence" value="ECO:0000318"/>
    <property type="project" value="GO_Central"/>
</dbReference>
<dbReference type="Gene3D" id="2.60.200.10">
    <property type="match status" value="1"/>
</dbReference>
<dbReference type="Gene3D" id="3.90.520.10">
    <property type="entry name" value="SMAD MH1 domain"/>
    <property type="match status" value="1"/>
</dbReference>
<dbReference type="InterPro" id="IPR013790">
    <property type="entry name" value="Dwarfin"/>
</dbReference>
<dbReference type="InterPro" id="IPR003619">
    <property type="entry name" value="MAD_homology1_Dwarfin-type"/>
</dbReference>
<dbReference type="InterPro" id="IPR013019">
    <property type="entry name" value="MAD_homology_MH1"/>
</dbReference>
<dbReference type="InterPro" id="IPR017855">
    <property type="entry name" value="SMAD-like_dom_sf"/>
</dbReference>
<dbReference type="InterPro" id="IPR001132">
    <property type="entry name" value="SMAD_dom_Dwarfin-type"/>
</dbReference>
<dbReference type="InterPro" id="IPR008984">
    <property type="entry name" value="SMAD_FHA_dom_sf"/>
</dbReference>
<dbReference type="InterPro" id="IPR036578">
    <property type="entry name" value="SMAD_MH1_sf"/>
</dbReference>
<dbReference type="PANTHER" id="PTHR13703:SF25">
    <property type="entry name" value="MOTHERS AGAINST DECAPENTAPLEGIC HOMOLOG"/>
    <property type="match status" value="1"/>
</dbReference>
<dbReference type="PANTHER" id="PTHR13703">
    <property type="entry name" value="SMAD"/>
    <property type="match status" value="1"/>
</dbReference>
<dbReference type="Pfam" id="PF03165">
    <property type="entry name" value="MH1"/>
    <property type="match status" value="1"/>
</dbReference>
<dbReference type="Pfam" id="PF03166">
    <property type="entry name" value="MH2"/>
    <property type="match status" value="1"/>
</dbReference>
<dbReference type="SMART" id="SM00523">
    <property type="entry name" value="DWA"/>
    <property type="match status" value="1"/>
</dbReference>
<dbReference type="SMART" id="SM00524">
    <property type="entry name" value="DWB"/>
    <property type="match status" value="1"/>
</dbReference>
<dbReference type="SUPFAM" id="SSF56366">
    <property type="entry name" value="SMAD MH1 domain"/>
    <property type="match status" value="1"/>
</dbReference>
<dbReference type="SUPFAM" id="SSF49879">
    <property type="entry name" value="SMAD/FHA domain"/>
    <property type="match status" value="1"/>
</dbReference>
<dbReference type="PROSITE" id="PS51075">
    <property type="entry name" value="MH1"/>
    <property type="match status" value="1"/>
</dbReference>
<dbReference type="PROSITE" id="PS51076">
    <property type="entry name" value="MH2"/>
    <property type="match status" value="1"/>
</dbReference>
<feature type="chain" id="PRO_0000452404" description="Smad protein daf-8">
    <location>
        <begin position="1"/>
        <end position="546"/>
    </location>
</feature>
<feature type="domain" description="MH1" evidence="1">
    <location>
        <begin position="16"/>
        <end position="137"/>
    </location>
</feature>
<feature type="domain" description="MH2" evidence="2">
    <location>
        <begin position="349"/>
        <end position="546"/>
    </location>
</feature>
<feature type="region of interest" description="Disordered" evidence="4">
    <location>
        <begin position="234"/>
        <end position="268"/>
    </location>
</feature>
<feature type="region of interest" description="Disordered" evidence="4">
    <location>
        <begin position="292"/>
        <end position="317"/>
    </location>
</feature>
<feature type="compositionally biased region" description="Polar residues" evidence="4">
    <location>
        <begin position="292"/>
        <end position="302"/>
    </location>
</feature>
<feature type="mutagenesis site" description="In sa343; constitutive dauer formation at 25 degrees Celsius." evidence="6">
    <location>
        <begin position="52"/>
        <end position="546"/>
    </location>
</feature>
<feature type="mutagenesis site" description="In e1393; constitutive dauer formation at 25 degrees Celsius." evidence="6">
    <original>S</original>
    <variation>L</variation>
    <location>
        <position position="391"/>
    </location>
</feature>
<feature type="mutagenesis site" description="In m85; constitutive dauer formation at 25 degrees Celsius. In the ovaries, the germ line mitotic zone at the distal end is significantly extended, with an increased number of metaphase and telophase cells. Reduces interaction between daf-3 and daf-14. On an nhr-69 mutant background, has defects in dauer entry and exit, and impaired Insulin/IGF-1-like signaling (IIS). Reduces binding of nhr-69 to the promoter, and up-regulates expression, of the potassium channel gene exp-2." evidence="6 7">
    <location>
        <begin position="416"/>
        <end position="546"/>
    </location>
</feature>
<feature type="mutagenesis site" description="In sa234; constitutive dauer formation at 25 degrees Celsius." evidence="5 6">
    <original>G</original>
    <variation>E</variation>
    <location>
        <position position="502"/>
    </location>
</feature>
<feature type="mutagenesis site" description="In m121; constitutive dauer formation at 25 degrees Celsius." evidence="6">
    <original>G</original>
    <variation>R</variation>
    <location>
        <position position="502"/>
    </location>
</feature>
<sequence>MDDFPSPEPTDPRLEAMAQKVLEETIITEGDGTIYWALKVTRLLSRVAKKHQCFEAFYDAVIKGDPKTRCCPAHNEKLIGNFGRAIMCVLRAFRFPVIRYESQVKSILTCRHAFNSHSRNVCLNPYHYRWVELPTCQVPPIIVNKELDYGEPPIRTEDALDDWNQKDLKEEQVVASWDVPNVTMRGDEIKLLYDRYAAENGDFQYMNYGNFGSFDGSPCSSTTMSLGSSFASLLQQSNRQDDEEPGYYRSGLSSPASHAASPREFIPNGNDTISLDQEMMDDSEVSDIMHSENFSSENNGNRKPTYADGRPITPIEPRPLYRSSALELGDLSRQAGIYECVEYEESPSWLKLIYYEEGTMIGEKADVEGHHCLIDGFTASRTDSETRSRFSLGWYNNPNRSPQTAEVRGLIGKGVRFYLLAGEVYVENLCNIPVFVQSIGANMKNGFQLNTVSKLPPTGTMKVFDMRLFSKQLRTAAEKTYQDVYCLSRMCTVRVSFCKGWGEHYRRSTVLRSPVWFQAHLNNPMHWVDSVLTCMGAPPRICSSRT</sequence>
<keyword id="KW-0963">Cytoplasm</keyword>
<keyword id="KW-0238">DNA-binding</keyword>
<keyword id="KW-0479">Metal-binding</keyword>
<keyword id="KW-0539">Nucleus</keyword>
<keyword id="KW-1185">Reference proteome</keyword>
<keyword id="KW-0804">Transcription</keyword>
<keyword id="KW-0805">Transcription regulation</keyword>
<keyword id="KW-0862">Zinc</keyword>
<accession>Q21733</accession>
<reference evidence="11" key="1">
    <citation type="journal article" date="1998" name="Science">
        <title>Genome sequence of the nematode C. elegans: a platform for investigating biology.</title>
        <authorList>
            <consortium name="The C. elegans sequencing consortium"/>
        </authorList>
    </citation>
    <scope>NUCLEOTIDE SEQUENCE [LARGE SCALE GENOMIC DNA]</scope>
    <source>
        <strain evidence="11">Bristol N2</strain>
    </source>
</reference>
<reference evidence="9" key="2">
    <citation type="journal article" date="2000" name="Dev. Biol.">
        <title>Targets of TGF-beta signaling in Caenorhabditis elegans dauer formation.</title>
        <authorList>
            <person name="Inoue T."/>
            <person name="Thomas J.H."/>
        </authorList>
    </citation>
    <scope>FUNCTION</scope>
    <scope>MUTAGENESIS OF GLY-502</scope>
</reference>
<reference evidence="9" key="3">
    <citation type="journal article" date="2010" name="Development">
        <title>Antagonistic Smad transcription factors control the dauer/non-dauer switch in C. elegans.</title>
        <authorList>
            <person name="Park D."/>
            <person name="Estevez A."/>
            <person name="Riddle D.L."/>
        </authorList>
    </citation>
    <scope>FUNCTION</scope>
    <scope>SUBUNIT</scope>
    <scope>INTERACTION WITH DAF-14 AND DAF-3</scope>
    <scope>SUBCELLULAR LOCATION</scope>
    <scope>TISSUE SPECIFICITY</scope>
    <scope>DEVELOPMENTAL STAGE</scope>
    <scope>MUTAGENESIS OF 52-GLN--THR-546; SER-391; 416-ARG--THR-546 AND GLY-502</scope>
</reference>
<reference evidence="9" key="4">
    <citation type="journal article" date="2012" name="PLoS Genet.">
        <title>Repression of a potassium channel by nuclear hormone receptor and TGF-beta signaling modulates insulin signaling in Caenorhabditis elegans.</title>
        <authorList>
            <person name="Park D."/>
            <person name="Jones K.L."/>
            <person name="Lee H."/>
            <person name="Snutch T.P."/>
            <person name="Taubert S."/>
            <person name="Riddle D.L."/>
        </authorList>
    </citation>
    <scope>FUNCTION</scope>
    <scope>INTERACTION WITH NHR-69</scope>
    <scope>MUTAGENESIS OF 416-ARG--THR-546</scope>
</reference>
<protein>
    <recommendedName>
        <fullName evidence="8">Smad protein daf-8</fullName>
    </recommendedName>
    <alternativeName>
        <fullName evidence="12">Abnormal dauer formation protein 8</fullName>
    </alternativeName>
</protein>
<gene>
    <name evidence="12" type="primary">daf-8</name>
    <name evidence="12" type="ORF">R05D11.1</name>
</gene>
<comment type="function">
    <text evidence="5 6 7">Probably a receptor-regulated SMAD (R-SMAD) that is an intracellular signal transducer and transcriptional modulator activated by TGF-beta-like daf-7 signaling (PubMed:10625546, PubMed:20081192). Plays a role in TGF-beta-like daf-7 signaling in regulating entry into a developmentally arrested larval state known as dauer, in response to harsh environmental conditions; partially redundant with R-SMAD daf-14 (PubMed:10625546, PubMed:20081192). Plays a role in inhibiting mitosis and promoting a switch to meiosis in the germ line, perhaps by down-regulating lag-2 transcription in the gonadal distal tip cells (DTCs) (PubMed:20081192). In cooperation with orphan nuclear receptor nhr-69 modulates the Insulin/IGF-1-like signaling (IIS) pathway, perhaps by regulating expression of the potassium channel exp-2, which in turn modulates the secretion of the insulin-like peptide daf-28 (PubMed:22359515).</text>
</comment>
<comment type="subunit">
    <text evidence="6 7 10">Homodimer (Probable). Interacts with R-SMAD daf-14 and co-SMAD daf-3 (PubMed:20081192). Interacts with orphan nuclear receptor nhr-69 (PubMed:22359515).</text>
</comment>
<comment type="subcellular location">
    <subcellularLocation>
        <location evidence="3 6">Cytoplasm</location>
    </subcellularLocation>
    <subcellularLocation>
        <location evidence="3 6">Nucleus</location>
    </subcellularLocation>
    <text evidence="6">Localizes to the nucleus in a TGF-beta-like receptor daf-1 dependent manner.</text>
</comment>
<comment type="tissue specificity">
    <text evidence="6">Expressed in the excretory cell and gonadal distal tip cells (DTCs).</text>
</comment>
<comment type="developmental stage">
    <text evidence="6">Expressed in developing embryos from the pre-comma stage through to hatching (PubMed:20081192). Most highly expressed in larval stage L1 and gradually decreases into adulthood (PubMed:20081192). In larval stages, expressed throughout development in the ventral nerve cord, intestine, gonadal distal tip cells (DTCs) and subsets of head and tail neurons, most strongly in head neurons ASI and ADL (PubMed:20081192).</text>
</comment>
<comment type="similarity">
    <text evidence="3">Belongs to the dwarfin/SMAD family.</text>
</comment>
<organism evidence="11">
    <name type="scientific">Caenorhabditis elegans</name>
    <dbReference type="NCBI Taxonomy" id="6239"/>
    <lineage>
        <taxon>Eukaryota</taxon>
        <taxon>Metazoa</taxon>
        <taxon>Ecdysozoa</taxon>
        <taxon>Nematoda</taxon>
        <taxon>Chromadorea</taxon>
        <taxon>Rhabditida</taxon>
        <taxon>Rhabditina</taxon>
        <taxon>Rhabditomorpha</taxon>
        <taxon>Rhabditoidea</taxon>
        <taxon>Rhabditidae</taxon>
        <taxon>Peloderinae</taxon>
        <taxon>Caenorhabditis</taxon>
    </lineage>
</organism>
<name>DAF8_CAEEL</name>